<reference key="1">
    <citation type="journal article" date="2007" name="J. Bacteriol.">
        <title>The complete genome sequence of Bacillus thuringiensis Al Hakam.</title>
        <authorList>
            <person name="Challacombe J.F."/>
            <person name="Altherr M.R."/>
            <person name="Xie G."/>
            <person name="Bhotika S.S."/>
            <person name="Brown N."/>
            <person name="Bruce D."/>
            <person name="Campbell C.S."/>
            <person name="Campbell M.L."/>
            <person name="Chen J."/>
            <person name="Chertkov O."/>
            <person name="Cleland C."/>
            <person name="Dimitrijevic M."/>
            <person name="Doggett N.A."/>
            <person name="Fawcett J.J."/>
            <person name="Glavina T."/>
            <person name="Goodwin L.A."/>
            <person name="Green L.D."/>
            <person name="Han C.S."/>
            <person name="Hill K.K."/>
            <person name="Hitchcock P."/>
            <person name="Jackson P.J."/>
            <person name="Keim P."/>
            <person name="Kewalramani A.R."/>
            <person name="Longmire J."/>
            <person name="Lucas S."/>
            <person name="Malfatti S."/>
            <person name="Martinez D."/>
            <person name="McMurry K."/>
            <person name="Meincke L.J."/>
            <person name="Misra M."/>
            <person name="Moseman B.L."/>
            <person name="Mundt M."/>
            <person name="Munk A.C."/>
            <person name="Okinaka R.T."/>
            <person name="Parson-Quintana B."/>
            <person name="Reilly L.P."/>
            <person name="Richardson P."/>
            <person name="Robinson D.L."/>
            <person name="Saunders E."/>
            <person name="Tapia R."/>
            <person name="Tesmer J.G."/>
            <person name="Thayer N."/>
            <person name="Thompson L.S."/>
            <person name="Tice H."/>
            <person name="Ticknor L.O."/>
            <person name="Wills P.L."/>
            <person name="Gilna P."/>
            <person name="Brettin T.S."/>
        </authorList>
    </citation>
    <scope>NUCLEOTIDE SEQUENCE [LARGE SCALE GENOMIC DNA]</scope>
    <source>
        <strain>Al Hakam</strain>
    </source>
</reference>
<protein>
    <recommendedName>
        <fullName evidence="1">Ferredoxin--NADP reductase 2</fullName>
        <shortName evidence="1">FNR 2</shortName>
        <shortName evidence="1">Fd-NADP(+) reductase 2</shortName>
        <ecNumber evidence="1">1.18.1.2</ecNumber>
    </recommendedName>
</protein>
<dbReference type="EC" id="1.18.1.2" evidence="1"/>
<dbReference type="EMBL" id="CP000485">
    <property type="protein sequence ID" value="ABK87662.1"/>
    <property type="molecule type" value="Genomic_DNA"/>
</dbReference>
<dbReference type="SMR" id="A0RKB9"/>
<dbReference type="KEGG" id="btl:BALH_4465"/>
<dbReference type="HOGENOM" id="CLU_031864_5_5_9"/>
<dbReference type="GO" id="GO:0004324">
    <property type="term" value="F:ferredoxin-NADP+ reductase activity"/>
    <property type="evidence" value="ECO:0007669"/>
    <property type="project" value="UniProtKB-UniRule"/>
</dbReference>
<dbReference type="GO" id="GO:0050660">
    <property type="term" value="F:flavin adenine dinucleotide binding"/>
    <property type="evidence" value="ECO:0007669"/>
    <property type="project" value="UniProtKB-UniRule"/>
</dbReference>
<dbReference type="GO" id="GO:0050661">
    <property type="term" value="F:NADP binding"/>
    <property type="evidence" value="ECO:0007669"/>
    <property type="project" value="UniProtKB-UniRule"/>
</dbReference>
<dbReference type="Gene3D" id="3.50.50.60">
    <property type="entry name" value="FAD/NAD(P)-binding domain"/>
    <property type="match status" value="2"/>
</dbReference>
<dbReference type="HAMAP" id="MF_01685">
    <property type="entry name" value="FENR2"/>
    <property type="match status" value="1"/>
</dbReference>
<dbReference type="InterPro" id="IPR036188">
    <property type="entry name" value="FAD/NAD-bd_sf"/>
</dbReference>
<dbReference type="InterPro" id="IPR023753">
    <property type="entry name" value="FAD/NAD-binding_dom"/>
</dbReference>
<dbReference type="InterPro" id="IPR022890">
    <property type="entry name" value="Fd--NADP_Rdtase_type_2"/>
</dbReference>
<dbReference type="InterPro" id="IPR050097">
    <property type="entry name" value="Ferredoxin-NADP_redctase_2"/>
</dbReference>
<dbReference type="PANTHER" id="PTHR48105">
    <property type="entry name" value="THIOREDOXIN REDUCTASE 1-RELATED-RELATED"/>
    <property type="match status" value="1"/>
</dbReference>
<dbReference type="Pfam" id="PF07992">
    <property type="entry name" value="Pyr_redox_2"/>
    <property type="match status" value="1"/>
</dbReference>
<dbReference type="PRINTS" id="PR00368">
    <property type="entry name" value="FADPNR"/>
</dbReference>
<dbReference type="PRINTS" id="PR00469">
    <property type="entry name" value="PNDRDTASEII"/>
</dbReference>
<dbReference type="SUPFAM" id="SSF51905">
    <property type="entry name" value="FAD/NAD(P)-binding domain"/>
    <property type="match status" value="1"/>
</dbReference>
<gene>
    <name type="ordered locus">BALH_4465</name>
</gene>
<sequence length="331" mass="36721">MKVAENQKVYDITIIGGGPTGLFTAFYGGMRQASVKIIESLPQLGGQLSALYPEKYIYDVAGFPKVRAQELVDNLKEQMKKFDPTVCLEEAVDTLEKQADGIFKLVTNKQTHYSKSVIITAGNGAFQPRRLELEGTAKYEKKNLHYFVDDMNKFAGKRVVVFGGGDSAVDWTMMLEPIADKVTIVHRRDKFRAHEHSVESLMNSRAEVSTPYVPVELIGDDKIEQVVLQHVKTEEKIIIDVDDVIVNYGFVSSLGPIKNWGLDIQKNSILVNSKMETNIPGIYAAGDICTYEGKVKLIACGFGEAPTAVNNAKAYFDPNAKLQPMHSSSMF</sequence>
<proteinExistence type="inferred from homology"/>
<keyword id="KW-0274">FAD</keyword>
<keyword id="KW-0285">Flavoprotein</keyword>
<keyword id="KW-0521">NADP</keyword>
<keyword id="KW-0560">Oxidoreductase</keyword>
<organism>
    <name type="scientific">Bacillus thuringiensis (strain Al Hakam)</name>
    <dbReference type="NCBI Taxonomy" id="412694"/>
    <lineage>
        <taxon>Bacteria</taxon>
        <taxon>Bacillati</taxon>
        <taxon>Bacillota</taxon>
        <taxon>Bacilli</taxon>
        <taxon>Bacillales</taxon>
        <taxon>Bacillaceae</taxon>
        <taxon>Bacillus</taxon>
        <taxon>Bacillus cereus group</taxon>
    </lineage>
</organism>
<accession>A0RKB9</accession>
<comment type="catalytic activity">
    <reaction evidence="1">
        <text>2 reduced [2Fe-2S]-[ferredoxin] + NADP(+) + H(+) = 2 oxidized [2Fe-2S]-[ferredoxin] + NADPH</text>
        <dbReference type="Rhea" id="RHEA:20125"/>
        <dbReference type="Rhea" id="RHEA-COMP:10000"/>
        <dbReference type="Rhea" id="RHEA-COMP:10001"/>
        <dbReference type="ChEBI" id="CHEBI:15378"/>
        <dbReference type="ChEBI" id="CHEBI:33737"/>
        <dbReference type="ChEBI" id="CHEBI:33738"/>
        <dbReference type="ChEBI" id="CHEBI:57783"/>
        <dbReference type="ChEBI" id="CHEBI:58349"/>
        <dbReference type="EC" id="1.18.1.2"/>
    </reaction>
</comment>
<comment type="cofactor">
    <cofactor evidence="1">
        <name>FAD</name>
        <dbReference type="ChEBI" id="CHEBI:57692"/>
    </cofactor>
    <text evidence="1">Binds 1 FAD per subunit.</text>
</comment>
<comment type="subunit">
    <text evidence="1">Homodimer.</text>
</comment>
<comment type="similarity">
    <text evidence="1">Belongs to the ferredoxin--NADP reductase type 2 family.</text>
</comment>
<evidence type="ECO:0000255" key="1">
    <source>
        <dbReference type="HAMAP-Rule" id="MF_01685"/>
    </source>
</evidence>
<feature type="chain" id="PRO_0000364803" description="Ferredoxin--NADP reductase 2">
    <location>
        <begin position="1"/>
        <end position="331"/>
    </location>
</feature>
<feature type="binding site" evidence="1">
    <location>
        <position position="20"/>
    </location>
    <ligand>
        <name>FAD</name>
        <dbReference type="ChEBI" id="CHEBI:57692"/>
    </ligand>
</feature>
<feature type="binding site" evidence="1">
    <location>
        <position position="39"/>
    </location>
    <ligand>
        <name>FAD</name>
        <dbReference type="ChEBI" id="CHEBI:57692"/>
    </ligand>
</feature>
<feature type="binding site" evidence="1">
    <location>
        <position position="47"/>
    </location>
    <ligand>
        <name>FAD</name>
        <dbReference type="ChEBI" id="CHEBI:57692"/>
    </ligand>
</feature>
<feature type="binding site" evidence="1">
    <location>
        <position position="52"/>
    </location>
    <ligand>
        <name>FAD</name>
        <dbReference type="ChEBI" id="CHEBI:57692"/>
    </ligand>
</feature>
<feature type="binding site" evidence="1">
    <location>
        <position position="92"/>
    </location>
    <ligand>
        <name>FAD</name>
        <dbReference type="ChEBI" id="CHEBI:57692"/>
    </ligand>
</feature>
<feature type="binding site" evidence="1">
    <location>
        <position position="126"/>
    </location>
    <ligand>
        <name>FAD</name>
        <dbReference type="ChEBI" id="CHEBI:57692"/>
    </ligand>
</feature>
<feature type="binding site" evidence="1">
    <location>
        <position position="287"/>
    </location>
    <ligand>
        <name>FAD</name>
        <dbReference type="ChEBI" id="CHEBI:57692"/>
    </ligand>
</feature>
<feature type="binding site" evidence="1">
    <location>
        <position position="328"/>
    </location>
    <ligand>
        <name>FAD</name>
        <dbReference type="ChEBI" id="CHEBI:57692"/>
    </ligand>
</feature>
<name>FENR2_BACAH</name>